<comment type="function">
    <text evidence="1">Cleaves proteins, imported into the mitochondrion, to their mature size. While most mitochondrial precursor proteins are processed to the mature form in one step by mitochondrial processing peptidase (MPP), the sequential cleavage by MIP of an octapeptide after initial processing by MPP is a required step for a subgroup of nuclear-encoded precursor proteins destined for the matrix or the inner membrane (By similarity).</text>
</comment>
<comment type="catalytic activity">
    <reaction>
        <text>Release of an N-terminal octapeptide as second stage of processing of some proteins imported into the mitochondrion.</text>
        <dbReference type="EC" id="3.4.24.59"/>
    </reaction>
</comment>
<comment type="cofactor">
    <cofactor evidence="1">
        <name>Zn(2+)</name>
        <dbReference type="ChEBI" id="CHEBI:29105"/>
    </cofactor>
    <text evidence="1">Binds 1 zinc ion.</text>
</comment>
<comment type="subcellular location">
    <subcellularLocation>
        <location evidence="1">Mitochondrion matrix</location>
    </subcellularLocation>
</comment>
<comment type="similarity">
    <text evidence="5">Belongs to the peptidase M3 family.</text>
</comment>
<name>PMIP_PICST</name>
<sequence length="812" mass="92517">MRLSRQLLRSTPFLTRAKPVSGKVSHFRSRTDLKGGSSNSSKSPDSVGDGASAHLRHIFDDQKYFNSFTKSAAETSGKVSSLPAIFSFRRSGLFCNDNLSTPHGLIDFSKNSLREAKSLVESMLHDVKSDPAGRLSYINKLDQLSDILCRVIDVAEFIRVAHPSQKWVNAAQQTHEIMFEYMNQLNTNVELYQNLRDILSDSSVTAQLTEEEIQVGEYLKQDFERSGIHMNPSARNNFVAITQEISLLGSRFNNEIHNLKSYWCEIPRYEFEQLEDSNLKKEILGYQSKAPPSKHSSQTISIPLVGHIPFTILTTCSIESIRREIWISLHNSSDEQIATLNNFLKYRATLAKMLGYKSFSHYQLEHKMAKNPENVVTFLTNLQKSLREKGVTEEIKKLYQYRDDSTISQVQKASTEDIIDGVKPWDRDYLLEKLQKASNKNLEELENINEYLSVGTIVAGLSELFKSIYNVEFVPVATLKGETWDQNQVRKVAVVDDSTKKKLGFLYLDFWSPKVLPSHFTIVCSRKLNLDIKSETKDKMRQLVQLDEDETSQLPVISLICNFQKSNDGHIGRFAGVENEKPTLLSLNQVDTVFHEMGHAMHSMIGRTDLHNLSGTRCATDFVELPSVLMESFSKDPRVLCKIAKHYETGEPLSPKLLAQHQTQKVMLDECETYMQSKMAMLDQVLHSEDVVRTISEDFANFDSTPIYHSLESKLKVFADTWSTWHGKFPHLFSYGAVYYSYLLDRAIAEKIWNGLFAHDPWSREAGEKYKNSILKWGGTRDPWECLADALENDELSKGDSRAMEIIGKDSL</sequence>
<proteinExistence type="inferred from homology"/>
<reference key="1">
    <citation type="journal article" date="2007" name="Nat. Biotechnol.">
        <title>Genome sequence of the lignocellulose-bioconverting and xylose-fermenting yeast Pichia stipitis.</title>
        <authorList>
            <person name="Jeffries T.W."/>
            <person name="Grigoriev I.V."/>
            <person name="Grimwood J."/>
            <person name="Laplaza J.M."/>
            <person name="Aerts A."/>
            <person name="Salamov A."/>
            <person name="Schmutz J."/>
            <person name="Lindquist E."/>
            <person name="Dehal P."/>
            <person name="Shapiro H."/>
            <person name="Jin Y.-S."/>
            <person name="Passoth V."/>
            <person name="Richardson P.M."/>
        </authorList>
    </citation>
    <scope>NUCLEOTIDE SEQUENCE [LARGE SCALE GENOMIC DNA]</scope>
    <source>
        <strain>ATCC 58785 / CBS 6054 / NBRC 10063 / NRRL Y-11545</strain>
    </source>
</reference>
<keyword id="KW-0378">Hydrolase</keyword>
<keyword id="KW-0479">Metal-binding</keyword>
<keyword id="KW-0482">Metalloprotease</keyword>
<keyword id="KW-0496">Mitochondrion</keyword>
<keyword id="KW-0645">Protease</keyword>
<keyword id="KW-1185">Reference proteome</keyword>
<keyword id="KW-0809">Transit peptide</keyword>
<keyword id="KW-0862">Zinc</keyword>
<accession>A3LUT4</accession>
<feature type="transit peptide" description="Mitochondrion" evidence="2">
    <location>
        <begin position="1"/>
        <end position="29"/>
    </location>
</feature>
<feature type="chain" id="PRO_0000338593" description="Mitochondrial intermediate peptidase">
    <location>
        <begin position="30"/>
        <end position="812"/>
    </location>
</feature>
<feature type="region of interest" description="Disordered" evidence="4">
    <location>
        <begin position="19"/>
        <end position="49"/>
    </location>
</feature>
<feature type="compositionally biased region" description="Low complexity" evidence="4">
    <location>
        <begin position="37"/>
        <end position="46"/>
    </location>
</feature>
<feature type="active site" evidence="3">
    <location>
        <position position="596"/>
    </location>
</feature>
<feature type="binding site" evidence="3">
    <location>
        <position position="595"/>
    </location>
    <ligand>
        <name>Zn(2+)</name>
        <dbReference type="ChEBI" id="CHEBI:29105"/>
        <note>catalytic</note>
    </ligand>
</feature>
<feature type="binding site" evidence="3">
    <location>
        <position position="599"/>
    </location>
    <ligand>
        <name>Zn(2+)</name>
        <dbReference type="ChEBI" id="CHEBI:29105"/>
        <note>catalytic</note>
    </ligand>
</feature>
<feature type="binding site" evidence="3">
    <location>
        <position position="602"/>
    </location>
    <ligand>
        <name>Zn(2+)</name>
        <dbReference type="ChEBI" id="CHEBI:29105"/>
        <note>catalytic</note>
    </ligand>
</feature>
<dbReference type="EC" id="3.4.24.59"/>
<dbReference type="EMBL" id="CP000499">
    <property type="protein sequence ID" value="ABN66647.2"/>
    <property type="molecule type" value="Genomic_DNA"/>
</dbReference>
<dbReference type="RefSeq" id="XP_001384676.2">
    <property type="nucleotide sequence ID" value="XM_001384639.1"/>
</dbReference>
<dbReference type="SMR" id="A3LUT4"/>
<dbReference type="FunCoup" id="A3LUT4">
    <property type="interactions" value="671"/>
</dbReference>
<dbReference type="STRING" id="322104.A3LUT4"/>
<dbReference type="GeneID" id="4839065"/>
<dbReference type="KEGG" id="pic:PICST_89481"/>
<dbReference type="eggNOG" id="KOG2090">
    <property type="taxonomic scope" value="Eukaryota"/>
</dbReference>
<dbReference type="HOGENOM" id="CLU_001805_0_0_1"/>
<dbReference type="InParanoid" id="A3LUT4"/>
<dbReference type="OMA" id="ALMFEYM"/>
<dbReference type="OrthoDB" id="17530at2759"/>
<dbReference type="Proteomes" id="UP000002258">
    <property type="component" value="Chromosome 5"/>
</dbReference>
<dbReference type="GO" id="GO:0005759">
    <property type="term" value="C:mitochondrial matrix"/>
    <property type="evidence" value="ECO:0007669"/>
    <property type="project" value="UniProtKB-SubCell"/>
</dbReference>
<dbReference type="GO" id="GO:0046872">
    <property type="term" value="F:metal ion binding"/>
    <property type="evidence" value="ECO:0007669"/>
    <property type="project" value="UniProtKB-KW"/>
</dbReference>
<dbReference type="GO" id="GO:0004222">
    <property type="term" value="F:metalloendopeptidase activity"/>
    <property type="evidence" value="ECO:0007669"/>
    <property type="project" value="UniProtKB-EC"/>
</dbReference>
<dbReference type="GO" id="GO:0006879">
    <property type="term" value="P:intracellular iron ion homeostasis"/>
    <property type="evidence" value="ECO:0007669"/>
    <property type="project" value="EnsemblFungi"/>
</dbReference>
<dbReference type="GO" id="GO:0006518">
    <property type="term" value="P:peptide metabolic process"/>
    <property type="evidence" value="ECO:0007669"/>
    <property type="project" value="TreeGrafter"/>
</dbReference>
<dbReference type="GO" id="GO:0006627">
    <property type="term" value="P:protein processing involved in protein targeting to mitochondrion"/>
    <property type="evidence" value="ECO:0007669"/>
    <property type="project" value="EnsemblFungi"/>
</dbReference>
<dbReference type="GO" id="GO:0050821">
    <property type="term" value="P:protein stabilization"/>
    <property type="evidence" value="ECO:0007669"/>
    <property type="project" value="EnsemblFungi"/>
</dbReference>
<dbReference type="CDD" id="cd06457">
    <property type="entry name" value="M3A_MIP"/>
    <property type="match status" value="1"/>
</dbReference>
<dbReference type="Gene3D" id="3.40.390.10">
    <property type="entry name" value="Collagenase (Catalytic Domain)"/>
    <property type="match status" value="1"/>
</dbReference>
<dbReference type="Gene3D" id="1.10.1370.10">
    <property type="entry name" value="Neurolysin, domain 3"/>
    <property type="match status" value="1"/>
</dbReference>
<dbReference type="InterPro" id="IPR033851">
    <property type="entry name" value="M3A_MIP"/>
</dbReference>
<dbReference type="InterPro" id="IPR024079">
    <property type="entry name" value="MetalloPept_cat_dom_sf"/>
</dbReference>
<dbReference type="InterPro" id="IPR024077">
    <property type="entry name" value="Neurolysin/TOP_dom2"/>
</dbReference>
<dbReference type="InterPro" id="IPR045090">
    <property type="entry name" value="Pept_M3A_M3B"/>
</dbReference>
<dbReference type="InterPro" id="IPR001567">
    <property type="entry name" value="Pept_M3A_M3B_dom"/>
</dbReference>
<dbReference type="PANTHER" id="PTHR11804:SF79">
    <property type="entry name" value="MITOCHONDRIAL INTERMEDIATE PEPTIDASE"/>
    <property type="match status" value="1"/>
</dbReference>
<dbReference type="PANTHER" id="PTHR11804">
    <property type="entry name" value="PROTEASE M3 THIMET OLIGOPEPTIDASE-RELATED"/>
    <property type="match status" value="1"/>
</dbReference>
<dbReference type="Pfam" id="PF01432">
    <property type="entry name" value="Peptidase_M3"/>
    <property type="match status" value="1"/>
</dbReference>
<dbReference type="SUPFAM" id="SSF55486">
    <property type="entry name" value="Metalloproteases ('zincins'), catalytic domain"/>
    <property type="match status" value="1"/>
</dbReference>
<dbReference type="PROSITE" id="PS00142">
    <property type="entry name" value="ZINC_PROTEASE"/>
    <property type="match status" value="1"/>
</dbReference>
<protein>
    <recommendedName>
        <fullName>Mitochondrial intermediate peptidase</fullName>
        <shortName>MIP</shortName>
        <ecNumber>3.4.24.59</ecNumber>
    </recommendedName>
    <alternativeName>
        <fullName>Octapeptidyl aminopeptidase</fullName>
    </alternativeName>
</protein>
<evidence type="ECO:0000250" key="1"/>
<evidence type="ECO:0000255" key="2"/>
<evidence type="ECO:0000255" key="3">
    <source>
        <dbReference type="PROSITE-ProRule" id="PRU10095"/>
    </source>
</evidence>
<evidence type="ECO:0000256" key="4">
    <source>
        <dbReference type="SAM" id="MobiDB-lite"/>
    </source>
</evidence>
<evidence type="ECO:0000305" key="5"/>
<gene>
    <name type="primary">OCT1</name>
    <name type="ORF">PICST_89481</name>
</gene>
<organism>
    <name type="scientific">Scheffersomyces stipitis (strain ATCC 58785 / CBS 6054 / NBRC 10063 / NRRL Y-11545)</name>
    <name type="common">Yeast</name>
    <name type="synonym">Pichia stipitis</name>
    <dbReference type="NCBI Taxonomy" id="322104"/>
    <lineage>
        <taxon>Eukaryota</taxon>
        <taxon>Fungi</taxon>
        <taxon>Dikarya</taxon>
        <taxon>Ascomycota</taxon>
        <taxon>Saccharomycotina</taxon>
        <taxon>Pichiomycetes</taxon>
        <taxon>Debaryomycetaceae</taxon>
        <taxon>Scheffersomyces</taxon>
    </lineage>
</organism>